<evidence type="ECO:0000255" key="1">
    <source>
        <dbReference type="HAMAP-Rule" id="MF_00791"/>
    </source>
</evidence>
<gene>
    <name evidence="1" type="primary">apaG</name>
    <name type="ordered locus">RSc2878</name>
    <name type="ORF">RS00224</name>
</gene>
<proteinExistence type="inferred from homology"/>
<feature type="chain" id="PRO_0000197956" description="Protein ApaG">
    <location>
        <begin position="1"/>
        <end position="124"/>
    </location>
</feature>
<feature type="domain" description="ApaG" evidence="1">
    <location>
        <begin position="1"/>
        <end position="124"/>
    </location>
</feature>
<accession>Q8XVF3</accession>
<reference key="1">
    <citation type="journal article" date="2002" name="Nature">
        <title>Genome sequence of the plant pathogen Ralstonia solanacearum.</title>
        <authorList>
            <person name="Salanoubat M."/>
            <person name="Genin S."/>
            <person name="Artiguenave F."/>
            <person name="Gouzy J."/>
            <person name="Mangenot S."/>
            <person name="Arlat M."/>
            <person name="Billault A."/>
            <person name="Brottier P."/>
            <person name="Camus J.-C."/>
            <person name="Cattolico L."/>
            <person name="Chandler M."/>
            <person name="Choisne N."/>
            <person name="Claudel-Renard C."/>
            <person name="Cunnac S."/>
            <person name="Demange N."/>
            <person name="Gaspin C."/>
            <person name="Lavie M."/>
            <person name="Moisan A."/>
            <person name="Robert C."/>
            <person name="Saurin W."/>
            <person name="Schiex T."/>
            <person name="Siguier P."/>
            <person name="Thebault P."/>
            <person name="Whalen M."/>
            <person name="Wincker P."/>
            <person name="Levy M."/>
            <person name="Weissenbach J."/>
            <person name="Boucher C.A."/>
        </authorList>
    </citation>
    <scope>NUCLEOTIDE SEQUENCE [LARGE SCALE GENOMIC DNA]</scope>
    <source>
        <strain>ATCC BAA-1114 / GMI1000</strain>
    </source>
</reference>
<name>APAG_RALN1</name>
<protein>
    <recommendedName>
        <fullName evidence="1">Protein ApaG</fullName>
    </recommendedName>
</protein>
<keyword id="KW-1185">Reference proteome</keyword>
<sequence>MSRYELTVQVRTRYLPEQSEPSQDQYAFAYTITIRNTGEVPSQLVSRHWVITDAESHVQEVAGLGVVGHQPLLPPGESFEYTSWATIKTPVGTMRGEYFCVAEDGHRFEAPIPEFALAMPRMLH</sequence>
<dbReference type="EMBL" id="AL646052">
    <property type="protein sequence ID" value="CAD16585.1"/>
    <property type="molecule type" value="Genomic_DNA"/>
</dbReference>
<dbReference type="RefSeq" id="WP_011002784.1">
    <property type="nucleotide sequence ID" value="NC_003295.1"/>
</dbReference>
<dbReference type="SMR" id="Q8XVF3"/>
<dbReference type="STRING" id="267608.RSc2878"/>
<dbReference type="EnsemblBacteria" id="CAD16585">
    <property type="protein sequence ID" value="CAD16585"/>
    <property type="gene ID" value="RSc2878"/>
</dbReference>
<dbReference type="KEGG" id="rso:RSc2878"/>
<dbReference type="eggNOG" id="COG2967">
    <property type="taxonomic scope" value="Bacteria"/>
</dbReference>
<dbReference type="HOGENOM" id="CLU_128074_0_0_4"/>
<dbReference type="Proteomes" id="UP000001436">
    <property type="component" value="Chromosome"/>
</dbReference>
<dbReference type="Gene3D" id="2.60.40.1470">
    <property type="entry name" value="ApaG domain"/>
    <property type="match status" value="1"/>
</dbReference>
<dbReference type="HAMAP" id="MF_00791">
    <property type="entry name" value="ApaG"/>
    <property type="match status" value="1"/>
</dbReference>
<dbReference type="InterPro" id="IPR050718">
    <property type="entry name" value="ApaG-like"/>
</dbReference>
<dbReference type="InterPro" id="IPR007474">
    <property type="entry name" value="ApaG_domain"/>
</dbReference>
<dbReference type="InterPro" id="IPR036767">
    <property type="entry name" value="ApaG_sf"/>
</dbReference>
<dbReference type="InterPro" id="IPR023065">
    <property type="entry name" value="Uncharacterised_ApaG"/>
</dbReference>
<dbReference type="NCBIfam" id="NF003967">
    <property type="entry name" value="PRK05461.1"/>
    <property type="match status" value="1"/>
</dbReference>
<dbReference type="PANTHER" id="PTHR47191">
    <property type="entry name" value="OS05G0170800 PROTEIN"/>
    <property type="match status" value="1"/>
</dbReference>
<dbReference type="PANTHER" id="PTHR47191:SF2">
    <property type="entry name" value="OS05G0170800 PROTEIN"/>
    <property type="match status" value="1"/>
</dbReference>
<dbReference type="Pfam" id="PF04379">
    <property type="entry name" value="DUF525"/>
    <property type="match status" value="1"/>
</dbReference>
<dbReference type="SUPFAM" id="SSF110069">
    <property type="entry name" value="ApaG-like"/>
    <property type="match status" value="1"/>
</dbReference>
<dbReference type="PROSITE" id="PS51087">
    <property type="entry name" value="APAG"/>
    <property type="match status" value="1"/>
</dbReference>
<organism>
    <name type="scientific">Ralstonia nicotianae (strain ATCC BAA-1114 / GMI1000)</name>
    <name type="common">Ralstonia solanacearum</name>
    <dbReference type="NCBI Taxonomy" id="267608"/>
    <lineage>
        <taxon>Bacteria</taxon>
        <taxon>Pseudomonadati</taxon>
        <taxon>Pseudomonadota</taxon>
        <taxon>Betaproteobacteria</taxon>
        <taxon>Burkholderiales</taxon>
        <taxon>Burkholderiaceae</taxon>
        <taxon>Ralstonia</taxon>
        <taxon>Ralstonia solanacearum species complex</taxon>
    </lineage>
</organism>